<feature type="chain" id="PRO_1000138416" description="Heat shock protein HspQ">
    <location>
        <begin position="1"/>
        <end position="105"/>
    </location>
</feature>
<feature type="region of interest" description="Disordered" evidence="2">
    <location>
        <begin position="76"/>
        <end position="105"/>
    </location>
</feature>
<name>HSPQ_SALG2</name>
<sequence>MIASKFGIGQQVRHSLLGYLGVVVDIDPEYSLDEPSPDELAVNDELRAAPWYHVVMEDDDGQPVHTYLAEAQLRSEMRDEHPEQPSMDELARTIRKQLQAPRLRN</sequence>
<dbReference type="EMBL" id="AM933173">
    <property type="protein sequence ID" value="CAR36859.1"/>
    <property type="molecule type" value="Genomic_DNA"/>
</dbReference>
<dbReference type="RefSeq" id="WP_000561983.1">
    <property type="nucleotide sequence ID" value="NC_011274.1"/>
</dbReference>
<dbReference type="SMR" id="B5R6D2"/>
<dbReference type="GeneID" id="66755429"/>
<dbReference type="KEGG" id="seg:SG0969"/>
<dbReference type="HOGENOM" id="CLU_123865_1_0_6"/>
<dbReference type="Proteomes" id="UP000008321">
    <property type="component" value="Chromosome"/>
</dbReference>
<dbReference type="GO" id="GO:0005737">
    <property type="term" value="C:cytoplasm"/>
    <property type="evidence" value="ECO:0007669"/>
    <property type="project" value="UniProtKB-SubCell"/>
</dbReference>
<dbReference type="GO" id="GO:0003677">
    <property type="term" value="F:DNA binding"/>
    <property type="evidence" value="ECO:0007669"/>
    <property type="project" value="InterPro"/>
</dbReference>
<dbReference type="GO" id="GO:0009408">
    <property type="term" value="P:response to heat"/>
    <property type="evidence" value="ECO:0007669"/>
    <property type="project" value="UniProtKB-UniRule"/>
</dbReference>
<dbReference type="Gene3D" id="2.30.30.390">
    <property type="entry name" value="Hemimethylated DNA-binding domain"/>
    <property type="match status" value="1"/>
</dbReference>
<dbReference type="HAMAP" id="MF_01194">
    <property type="entry name" value="HspQ"/>
    <property type="match status" value="1"/>
</dbReference>
<dbReference type="InterPro" id="IPR011722">
    <property type="entry name" value="Hemimethylated_DNA-bd_dom"/>
</dbReference>
<dbReference type="InterPro" id="IPR036623">
    <property type="entry name" value="Hemimethylated_DNA-bd_sf"/>
</dbReference>
<dbReference type="InterPro" id="IPR022866">
    <property type="entry name" value="HspQ"/>
</dbReference>
<dbReference type="NCBIfam" id="NF010729">
    <property type="entry name" value="PRK14129.1"/>
    <property type="match status" value="1"/>
</dbReference>
<dbReference type="NCBIfam" id="TIGR02097">
    <property type="entry name" value="yccV"/>
    <property type="match status" value="1"/>
</dbReference>
<dbReference type="Pfam" id="PF08755">
    <property type="entry name" value="YccV-like"/>
    <property type="match status" value="1"/>
</dbReference>
<dbReference type="SMART" id="SM00992">
    <property type="entry name" value="YccV-like"/>
    <property type="match status" value="1"/>
</dbReference>
<dbReference type="SUPFAM" id="SSF141255">
    <property type="entry name" value="YccV-like"/>
    <property type="match status" value="1"/>
</dbReference>
<gene>
    <name evidence="1" type="primary">hspQ</name>
    <name type="ordered locus">SG0969</name>
</gene>
<organism>
    <name type="scientific">Salmonella gallinarum (strain 287/91 / NCTC 13346)</name>
    <dbReference type="NCBI Taxonomy" id="550538"/>
    <lineage>
        <taxon>Bacteria</taxon>
        <taxon>Pseudomonadati</taxon>
        <taxon>Pseudomonadota</taxon>
        <taxon>Gammaproteobacteria</taxon>
        <taxon>Enterobacterales</taxon>
        <taxon>Enterobacteriaceae</taxon>
        <taxon>Salmonella</taxon>
    </lineage>
</organism>
<reference key="1">
    <citation type="journal article" date="2008" name="Genome Res.">
        <title>Comparative genome analysis of Salmonella enteritidis PT4 and Salmonella gallinarum 287/91 provides insights into evolutionary and host adaptation pathways.</title>
        <authorList>
            <person name="Thomson N.R."/>
            <person name="Clayton D.J."/>
            <person name="Windhorst D."/>
            <person name="Vernikos G."/>
            <person name="Davidson S."/>
            <person name="Churcher C."/>
            <person name="Quail M.A."/>
            <person name="Stevens M."/>
            <person name="Jones M.A."/>
            <person name="Watson M."/>
            <person name="Barron A."/>
            <person name="Layton A."/>
            <person name="Pickard D."/>
            <person name="Kingsley R.A."/>
            <person name="Bignell A."/>
            <person name="Clark L."/>
            <person name="Harris B."/>
            <person name="Ormond D."/>
            <person name="Abdellah Z."/>
            <person name="Brooks K."/>
            <person name="Cherevach I."/>
            <person name="Chillingworth T."/>
            <person name="Woodward J."/>
            <person name="Norberczak H."/>
            <person name="Lord A."/>
            <person name="Arrowsmith C."/>
            <person name="Jagels K."/>
            <person name="Moule S."/>
            <person name="Mungall K."/>
            <person name="Saunders M."/>
            <person name="Whitehead S."/>
            <person name="Chabalgoity J.A."/>
            <person name="Maskell D."/>
            <person name="Humphreys T."/>
            <person name="Roberts M."/>
            <person name="Barrow P.A."/>
            <person name="Dougan G."/>
            <person name="Parkhill J."/>
        </authorList>
    </citation>
    <scope>NUCLEOTIDE SEQUENCE [LARGE SCALE GENOMIC DNA]</scope>
    <source>
        <strain>287/91 / NCTC 13346</strain>
    </source>
</reference>
<comment type="function">
    <text evidence="1">Involved in the degradation of certain denaturated proteins, including DnaA, during heat shock stress.</text>
</comment>
<comment type="subcellular location">
    <subcellularLocation>
        <location evidence="1">Cytoplasm</location>
    </subcellularLocation>
</comment>
<comment type="similarity">
    <text evidence="1">Belongs to the HspQ family.</text>
</comment>
<keyword id="KW-0963">Cytoplasm</keyword>
<keyword id="KW-0346">Stress response</keyword>
<accession>B5R6D2</accession>
<protein>
    <recommendedName>
        <fullName evidence="1">Heat shock protein HspQ</fullName>
    </recommendedName>
</protein>
<evidence type="ECO:0000255" key="1">
    <source>
        <dbReference type="HAMAP-Rule" id="MF_01194"/>
    </source>
</evidence>
<evidence type="ECO:0000256" key="2">
    <source>
        <dbReference type="SAM" id="MobiDB-lite"/>
    </source>
</evidence>
<proteinExistence type="inferred from homology"/>